<sequence length="101" mass="10708">MAAISREEVAHLARLSRLAVTEEELGTLAGQLDVILQAVAQVGEVTAADIPPTSHSVPLTNVLRDDVVAPCLSPQEALSGAPDAEEQRFRVPRILDEDVAS</sequence>
<proteinExistence type="inferred from homology"/>
<organism>
    <name type="scientific">Salinispora arenicola (strain CNS-205)</name>
    <dbReference type="NCBI Taxonomy" id="391037"/>
    <lineage>
        <taxon>Bacteria</taxon>
        <taxon>Bacillati</taxon>
        <taxon>Actinomycetota</taxon>
        <taxon>Actinomycetes</taxon>
        <taxon>Micromonosporales</taxon>
        <taxon>Micromonosporaceae</taxon>
        <taxon>Salinispora</taxon>
    </lineage>
</organism>
<protein>
    <recommendedName>
        <fullName evidence="1">Aspartyl/glutamyl-tRNA(Asn/Gln) amidotransferase subunit C</fullName>
        <shortName evidence="1">Asp/Glu-ADT subunit C</shortName>
        <ecNumber evidence="1">6.3.5.-</ecNumber>
    </recommendedName>
</protein>
<accession>A8M5E5</accession>
<gene>
    <name evidence="1" type="primary">gatC</name>
    <name type="ordered locus">Sare_1111</name>
</gene>
<reference key="1">
    <citation type="submission" date="2007-10" db="EMBL/GenBank/DDBJ databases">
        <title>Complete sequence of Salinispora arenicola CNS-205.</title>
        <authorList>
            <consortium name="US DOE Joint Genome Institute"/>
            <person name="Copeland A."/>
            <person name="Lucas S."/>
            <person name="Lapidus A."/>
            <person name="Barry K."/>
            <person name="Glavina del Rio T."/>
            <person name="Dalin E."/>
            <person name="Tice H."/>
            <person name="Pitluck S."/>
            <person name="Foster B."/>
            <person name="Schmutz J."/>
            <person name="Larimer F."/>
            <person name="Land M."/>
            <person name="Hauser L."/>
            <person name="Kyrpides N."/>
            <person name="Ivanova N."/>
            <person name="Jensen P.R."/>
            <person name="Moore B.S."/>
            <person name="Penn K."/>
            <person name="Jenkins C."/>
            <person name="Udwary D."/>
            <person name="Xiang L."/>
            <person name="Gontang E."/>
            <person name="Richardson P."/>
        </authorList>
    </citation>
    <scope>NUCLEOTIDE SEQUENCE [LARGE SCALE GENOMIC DNA]</scope>
    <source>
        <strain>CNS-205</strain>
    </source>
</reference>
<feature type="chain" id="PRO_1000076195" description="Aspartyl/glutamyl-tRNA(Asn/Gln) amidotransferase subunit C">
    <location>
        <begin position="1"/>
        <end position="101"/>
    </location>
</feature>
<feature type="region of interest" description="Disordered" evidence="2">
    <location>
        <begin position="75"/>
        <end position="101"/>
    </location>
</feature>
<feature type="compositionally biased region" description="Basic and acidic residues" evidence="2">
    <location>
        <begin position="85"/>
        <end position="101"/>
    </location>
</feature>
<comment type="function">
    <text evidence="1">Allows the formation of correctly charged Asn-tRNA(Asn) or Gln-tRNA(Gln) through the transamidation of misacylated Asp-tRNA(Asn) or Glu-tRNA(Gln) in organisms which lack either or both of asparaginyl-tRNA or glutaminyl-tRNA synthetases. The reaction takes place in the presence of glutamine and ATP through an activated phospho-Asp-tRNA(Asn) or phospho-Glu-tRNA(Gln).</text>
</comment>
<comment type="catalytic activity">
    <reaction evidence="1">
        <text>L-glutamyl-tRNA(Gln) + L-glutamine + ATP + H2O = L-glutaminyl-tRNA(Gln) + L-glutamate + ADP + phosphate + H(+)</text>
        <dbReference type="Rhea" id="RHEA:17521"/>
        <dbReference type="Rhea" id="RHEA-COMP:9681"/>
        <dbReference type="Rhea" id="RHEA-COMP:9684"/>
        <dbReference type="ChEBI" id="CHEBI:15377"/>
        <dbReference type="ChEBI" id="CHEBI:15378"/>
        <dbReference type="ChEBI" id="CHEBI:29985"/>
        <dbReference type="ChEBI" id="CHEBI:30616"/>
        <dbReference type="ChEBI" id="CHEBI:43474"/>
        <dbReference type="ChEBI" id="CHEBI:58359"/>
        <dbReference type="ChEBI" id="CHEBI:78520"/>
        <dbReference type="ChEBI" id="CHEBI:78521"/>
        <dbReference type="ChEBI" id="CHEBI:456216"/>
    </reaction>
</comment>
<comment type="catalytic activity">
    <reaction evidence="1">
        <text>L-aspartyl-tRNA(Asn) + L-glutamine + ATP + H2O = L-asparaginyl-tRNA(Asn) + L-glutamate + ADP + phosphate + 2 H(+)</text>
        <dbReference type="Rhea" id="RHEA:14513"/>
        <dbReference type="Rhea" id="RHEA-COMP:9674"/>
        <dbReference type="Rhea" id="RHEA-COMP:9677"/>
        <dbReference type="ChEBI" id="CHEBI:15377"/>
        <dbReference type="ChEBI" id="CHEBI:15378"/>
        <dbReference type="ChEBI" id="CHEBI:29985"/>
        <dbReference type="ChEBI" id="CHEBI:30616"/>
        <dbReference type="ChEBI" id="CHEBI:43474"/>
        <dbReference type="ChEBI" id="CHEBI:58359"/>
        <dbReference type="ChEBI" id="CHEBI:78515"/>
        <dbReference type="ChEBI" id="CHEBI:78516"/>
        <dbReference type="ChEBI" id="CHEBI:456216"/>
    </reaction>
</comment>
<comment type="subunit">
    <text evidence="1">Heterotrimer of A, B and C subunits.</text>
</comment>
<comment type="similarity">
    <text evidence="1">Belongs to the GatC family.</text>
</comment>
<name>GATC_SALAI</name>
<evidence type="ECO:0000255" key="1">
    <source>
        <dbReference type="HAMAP-Rule" id="MF_00122"/>
    </source>
</evidence>
<evidence type="ECO:0000256" key="2">
    <source>
        <dbReference type="SAM" id="MobiDB-lite"/>
    </source>
</evidence>
<dbReference type="EC" id="6.3.5.-" evidence="1"/>
<dbReference type="EMBL" id="CP000850">
    <property type="protein sequence ID" value="ABV97019.1"/>
    <property type="molecule type" value="Genomic_DNA"/>
</dbReference>
<dbReference type="SMR" id="A8M5E5"/>
<dbReference type="STRING" id="391037.Sare_1111"/>
<dbReference type="KEGG" id="saq:Sare_1111"/>
<dbReference type="PATRIC" id="fig|391037.6.peg.1127"/>
<dbReference type="eggNOG" id="COG0721">
    <property type="taxonomic scope" value="Bacteria"/>
</dbReference>
<dbReference type="HOGENOM" id="CLU_105899_1_0_11"/>
<dbReference type="OrthoDB" id="5295223at2"/>
<dbReference type="GO" id="GO:0050566">
    <property type="term" value="F:asparaginyl-tRNA synthase (glutamine-hydrolyzing) activity"/>
    <property type="evidence" value="ECO:0007669"/>
    <property type="project" value="RHEA"/>
</dbReference>
<dbReference type="GO" id="GO:0005524">
    <property type="term" value="F:ATP binding"/>
    <property type="evidence" value="ECO:0007669"/>
    <property type="project" value="UniProtKB-KW"/>
</dbReference>
<dbReference type="GO" id="GO:0050567">
    <property type="term" value="F:glutaminyl-tRNA synthase (glutamine-hydrolyzing) activity"/>
    <property type="evidence" value="ECO:0007669"/>
    <property type="project" value="UniProtKB-UniRule"/>
</dbReference>
<dbReference type="GO" id="GO:0006450">
    <property type="term" value="P:regulation of translational fidelity"/>
    <property type="evidence" value="ECO:0007669"/>
    <property type="project" value="InterPro"/>
</dbReference>
<dbReference type="GO" id="GO:0006412">
    <property type="term" value="P:translation"/>
    <property type="evidence" value="ECO:0007669"/>
    <property type="project" value="UniProtKB-UniRule"/>
</dbReference>
<dbReference type="Gene3D" id="1.10.20.60">
    <property type="entry name" value="Glu-tRNAGln amidotransferase C subunit, N-terminal domain"/>
    <property type="match status" value="1"/>
</dbReference>
<dbReference type="HAMAP" id="MF_00122">
    <property type="entry name" value="GatC"/>
    <property type="match status" value="1"/>
</dbReference>
<dbReference type="InterPro" id="IPR036113">
    <property type="entry name" value="Asp/Glu-ADT_sf_sub_c"/>
</dbReference>
<dbReference type="InterPro" id="IPR003837">
    <property type="entry name" value="GatC"/>
</dbReference>
<dbReference type="NCBIfam" id="TIGR00135">
    <property type="entry name" value="gatC"/>
    <property type="match status" value="1"/>
</dbReference>
<dbReference type="Pfam" id="PF02686">
    <property type="entry name" value="GatC"/>
    <property type="match status" value="1"/>
</dbReference>
<dbReference type="SUPFAM" id="SSF141000">
    <property type="entry name" value="Glu-tRNAGln amidotransferase C subunit"/>
    <property type="match status" value="1"/>
</dbReference>
<keyword id="KW-0067">ATP-binding</keyword>
<keyword id="KW-0436">Ligase</keyword>
<keyword id="KW-0547">Nucleotide-binding</keyword>
<keyword id="KW-0648">Protein biosynthesis</keyword>